<feature type="chain" id="PRO_0000458896" description="Vacuolar protein sorting-associated protein 30">
    <location>
        <begin position="1"/>
        <end position="512"/>
    </location>
</feature>
<feature type="region of interest" description="BARA" evidence="1">
    <location>
        <begin position="294"/>
        <end position="511"/>
    </location>
</feature>
<sequence length="512" mass="59378">MNDLQFDSLKVFKCQNCHLPLQVDPTMLHLSKSQRELLLPREDRRPGVEEFNLRQESQDMLKKVKTGKEAKQLLKEDFQSSDFLFLRDIDDSIAEKDLKKGLEGDNDDRKSNEDSMVSELDVEDTAKTLSTQIERLSKLFEIMSTSESNIDYPICQECCNIMMKRLKTDYEKAVKERDLYFQFVKRIEKQQLDESDSSQLSLRQKEYTDQTKKINQERERLLLELTKKEQVEEELDAEIAELTRQISEKKANERATRKIDNAKQWDKMKLLNDISSLQYQYETELNKLDQLRKTNIYNESFRISHQGPFATICGLKLGSYEDHKVSYSEINAALGQLVLLLMTISSSLNIKISGYRLQPIGSTSKVSKFLADKEDWETYELYFSSNFSLEKIFKRETDFDKGMESLLDIVKQISLSFSTVVSSDTDINIQDERTRSNDSMLNGGANRNANLRADRLFTESELPYMIDGDRINGISVKLYGAEPNLEWTTAMKFLLTDAKWLLVFCSSKLSLQ</sequence>
<gene>
    <name evidence="3" type="primary">VPS30</name>
    <name type="ordered locus">CAGL0J06886g</name>
</gene>
<comment type="function">
    <text evidence="1 2">Required for cytoplasm to vacuole transport (Cvt), autophagy, nucleophagy, and mitophagy, as a part of the autophagy-specific VPS34 PI3-kinase complex I (By similarity). This complex is essential to recruit the ATG8-phosphatidylinositol conjugate and the ATG12-ATG5 conjugate to the pre-autophagosomal structure (By similarity). Also involved in endosome-to-Golgi retrograde transport as part of the VPS34 PI3-kinase complex II (By similarity). This second complex is required for the endosome-to-Golgi retrieval of PEP1 and KEX2, and the recruitment of VPS5 and VPS7, two components of the retromer complex, to endosomal membranes (probably through the synthesis of a specific pool of phosphatidylinositol 3-phosphate recruiting the retromer to the endosomes) (By similarity). Required for survival and/or proliferation in kidneys but not brain (PubMed:25223215).</text>
</comment>
<comment type="subunit">
    <text evidence="1">Component of the autophagy-specific VPS34 PI3-kinase complex I composed of VPS15, VPS30, VPS34, ATG14 and ATG38; and of the VPS34 PI3-kinase complex II composed of VPS15, VPS30, VPS34 and VPS38.</text>
</comment>
<comment type="subcellular location">
    <subcellularLocation>
        <location>Endosome membrane</location>
        <topology>Peripheral membrane protein</topology>
    </subcellularLocation>
    <subcellularLocation>
        <location>Vacuole membrane</location>
        <topology>Peripheral membrane protein</topology>
    </subcellularLocation>
    <subcellularLocation>
        <location>Preautophagosomal structure membrane</location>
        <topology>Peripheral membrane protein</topology>
    </subcellularLocation>
    <text evidence="1">With the VPS34 PI3-kinase complex I, localizes to the vacuole-isolation membrane contact site (VICS) during isolation membrane (IM) expansion. The IM is a membrane sac generated from the pre-autophagosomal structure that ultimately expands to become a mature autophagosome.</text>
</comment>
<comment type="domain">
    <text evidence="1">The C-terminal domain called the BARA domain is dispensable for the construction of both VPS34 PI3-kinase complexes, but is specifically required for autophagy through the targeting of complex I to the pre-autophagosomal structure.</text>
</comment>
<comment type="disruption phenotype">
    <text evidence="2">leads to seven- to eightfold decrease of the renal fungal load of infected mice (PubMed:25223215). Does not affect protein trafficking (PubMed:25223215).</text>
</comment>
<comment type="similarity">
    <text evidence="4">Belongs to the beclin family.</text>
</comment>
<protein>
    <recommendedName>
        <fullName evidence="3">Vacuolar protein sorting-associated protein 30</fullName>
    </recommendedName>
    <alternativeName>
        <fullName evidence="1">Autophagy-related protein 6</fullName>
    </alternativeName>
</protein>
<keyword id="KW-0967">Endosome</keyword>
<keyword id="KW-0472">Membrane</keyword>
<keyword id="KW-1185">Reference proteome</keyword>
<keyword id="KW-0926">Vacuole</keyword>
<proteinExistence type="inferred from homology"/>
<name>BECN1_CANGA</name>
<dbReference type="EMBL" id="CR380956">
    <property type="protein sequence ID" value="CAG60956.1"/>
    <property type="molecule type" value="Genomic_DNA"/>
</dbReference>
<dbReference type="RefSeq" id="XP_448005.1">
    <property type="nucleotide sequence ID" value="XM_448005.1"/>
</dbReference>
<dbReference type="SMR" id="Q6FP39"/>
<dbReference type="FunCoup" id="Q6FP39">
    <property type="interactions" value="573"/>
</dbReference>
<dbReference type="STRING" id="284593.Q6FP39"/>
<dbReference type="EnsemblFungi" id="CAGL0J06886g-T">
    <property type="protein sequence ID" value="CAGL0J06886g-T-p1"/>
    <property type="gene ID" value="CAGL0J06886g"/>
</dbReference>
<dbReference type="GeneID" id="2889623"/>
<dbReference type="KEGG" id="cgr:2889623"/>
<dbReference type="CGD" id="CAL0132924">
    <property type="gene designation" value="VPS30"/>
</dbReference>
<dbReference type="VEuPathDB" id="FungiDB:CAGL0J06886g"/>
<dbReference type="eggNOG" id="KOG2751">
    <property type="taxonomic scope" value="Eukaryota"/>
</dbReference>
<dbReference type="HOGENOM" id="CLU_024219_3_0_1"/>
<dbReference type="InParanoid" id="Q6FP39"/>
<dbReference type="OMA" id="EWDVYKA"/>
<dbReference type="Proteomes" id="UP000002428">
    <property type="component" value="Chromosome J"/>
</dbReference>
<dbReference type="GO" id="GO:0005829">
    <property type="term" value="C:cytosol"/>
    <property type="evidence" value="ECO:0007669"/>
    <property type="project" value="GOC"/>
</dbReference>
<dbReference type="GO" id="GO:0010008">
    <property type="term" value="C:endosome membrane"/>
    <property type="evidence" value="ECO:0007669"/>
    <property type="project" value="UniProtKB-SubCell"/>
</dbReference>
<dbReference type="GO" id="GO:0034045">
    <property type="term" value="C:phagophore assembly site membrane"/>
    <property type="evidence" value="ECO:0007669"/>
    <property type="project" value="UniProtKB-SubCell"/>
</dbReference>
<dbReference type="GO" id="GO:0034271">
    <property type="term" value="C:phosphatidylinositol 3-kinase complex, class III, type I"/>
    <property type="evidence" value="ECO:0007669"/>
    <property type="project" value="EnsemblFungi"/>
</dbReference>
<dbReference type="GO" id="GO:0034272">
    <property type="term" value="C:phosphatidylinositol 3-kinase complex, class III, type II"/>
    <property type="evidence" value="ECO:0007669"/>
    <property type="project" value="EnsemblFungi"/>
</dbReference>
<dbReference type="GO" id="GO:0005774">
    <property type="term" value="C:vacuolar membrane"/>
    <property type="evidence" value="ECO:0007669"/>
    <property type="project" value="UniProtKB-SubCell"/>
</dbReference>
<dbReference type="GO" id="GO:0120095">
    <property type="term" value="C:vacuole-isolation membrane contact site"/>
    <property type="evidence" value="ECO:0007669"/>
    <property type="project" value="EnsemblFungi"/>
</dbReference>
<dbReference type="GO" id="GO:0043548">
    <property type="term" value="F:phosphatidylinositol 3-kinase binding"/>
    <property type="evidence" value="ECO:0007669"/>
    <property type="project" value="TreeGrafter"/>
</dbReference>
<dbReference type="GO" id="GO:0030674">
    <property type="term" value="F:protein-macromolecule adaptor activity"/>
    <property type="evidence" value="ECO:0007669"/>
    <property type="project" value="TreeGrafter"/>
</dbReference>
<dbReference type="GO" id="GO:0000045">
    <property type="term" value="P:autophagosome assembly"/>
    <property type="evidence" value="ECO:0007669"/>
    <property type="project" value="EnsemblFungi"/>
</dbReference>
<dbReference type="GO" id="GO:0006995">
    <property type="term" value="P:cellular response to nitrogen starvation"/>
    <property type="evidence" value="ECO:0007669"/>
    <property type="project" value="TreeGrafter"/>
</dbReference>
<dbReference type="GO" id="GO:0051365">
    <property type="term" value="P:cellular response to potassium ion starvation"/>
    <property type="evidence" value="ECO:0007669"/>
    <property type="project" value="EnsemblFungi"/>
</dbReference>
<dbReference type="GO" id="GO:0032258">
    <property type="term" value="P:cytoplasm to vacuole targeting by the Cvt pathway"/>
    <property type="evidence" value="ECO:0007669"/>
    <property type="project" value="EnsemblFungi"/>
</dbReference>
<dbReference type="GO" id="GO:0045324">
    <property type="term" value="P:late endosome to vacuole transport"/>
    <property type="evidence" value="ECO:0007669"/>
    <property type="project" value="EnsemblFungi"/>
</dbReference>
<dbReference type="GO" id="GO:0000423">
    <property type="term" value="P:mitophagy"/>
    <property type="evidence" value="ECO:0007669"/>
    <property type="project" value="TreeGrafter"/>
</dbReference>
<dbReference type="GO" id="GO:0000425">
    <property type="term" value="P:pexophagy"/>
    <property type="evidence" value="ECO:0007669"/>
    <property type="project" value="EnsemblFungi"/>
</dbReference>
<dbReference type="GO" id="GO:0046854">
    <property type="term" value="P:phosphatidylinositol phosphate biosynthetic process"/>
    <property type="evidence" value="ECO:0007669"/>
    <property type="project" value="EnsemblFungi"/>
</dbReference>
<dbReference type="GO" id="GO:0034727">
    <property type="term" value="P:piecemeal microautophagy of the nucleus"/>
    <property type="evidence" value="ECO:0007669"/>
    <property type="project" value="EnsemblFungi"/>
</dbReference>
<dbReference type="GO" id="GO:0042147">
    <property type="term" value="P:retrograde transport, endosome to Golgi"/>
    <property type="evidence" value="ECO:0007669"/>
    <property type="project" value="EnsemblFungi"/>
</dbReference>
<dbReference type="Gene3D" id="1.10.418.40">
    <property type="entry name" value="Autophagy protein 6/Beclin 1"/>
    <property type="match status" value="1"/>
</dbReference>
<dbReference type="InterPro" id="IPR007243">
    <property type="entry name" value="Atg6/Beclin"/>
</dbReference>
<dbReference type="InterPro" id="IPR038274">
    <property type="entry name" value="Atg6/Beclin_C_sf"/>
</dbReference>
<dbReference type="InterPro" id="IPR041691">
    <property type="entry name" value="Atg6/beclin_CC"/>
</dbReference>
<dbReference type="InterPro" id="IPR040455">
    <property type="entry name" value="Atg6_BARA"/>
</dbReference>
<dbReference type="PANTHER" id="PTHR12768">
    <property type="entry name" value="BECLIN 1"/>
    <property type="match status" value="1"/>
</dbReference>
<dbReference type="PANTHER" id="PTHR12768:SF4">
    <property type="entry name" value="BECLIN-1"/>
    <property type="match status" value="1"/>
</dbReference>
<dbReference type="Pfam" id="PF04111">
    <property type="entry name" value="APG6"/>
    <property type="match status" value="1"/>
</dbReference>
<dbReference type="Pfam" id="PF17675">
    <property type="entry name" value="APG6_N"/>
    <property type="match status" value="1"/>
</dbReference>
<organism>
    <name type="scientific">Candida glabrata (strain ATCC 2001 / BCRC 20586 / JCM 3761 / NBRC 0622 / NRRL Y-65 / CBS 138)</name>
    <name type="common">Yeast</name>
    <name type="synonym">Nakaseomyces glabratus</name>
    <dbReference type="NCBI Taxonomy" id="284593"/>
    <lineage>
        <taxon>Eukaryota</taxon>
        <taxon>Fungi</taxon>
        <taxon>Dikarya</taxon>
        <taxon>Ascomycota</taxon>
        <taxon>Saccharomycotina</taxon>
        <taxon>Saccharomycetes</taxon>
        <taxon>Saccharomycetales</taxon>
        <taxon>Saccharomycetaceae</taxon>
        <taxon>Nakaseomyces</taxon>
    </lineage>
</organism>
<accession>Q6FP39</accession>
<reference key="1">
    <citation type="journal article" date="2004" name="Nature">
        <title>Genome evolution in yeasts.</title>
        <authorList>
            <person name="Dujon B."/>
            <person name="Sherman D."/>
            <person name="Fischer G."/>
            <person name="Durrens P."/>
            <person name="Casaregola S."/>
            <person name="Lafontaine I."/>
            <person name="de Montigny J."/>
            <person name="Marck C."/>
            <person name="Neuveglise C."/>
            <person name="Talla E."/>
            <person name="Goffard N."/>
            <person name="Frangeul L."/>
            <person name="Aigle M."/>
            <person name="Anthouard V."/>
            <person name="Babour A."/>
            <person name="Barbe V."/>
            <person name="Barnay S."/>
            <person name="Blanchin S."/>
            <person name="Beckerich J.-M."/>
            <person name="Beyne E."/>
            <person name="Bleykasten C."/>
            <person name="Boisrame A."/>
            <person name="Boyer J."/>
            <person name="Cattolico L."/>
            <person name="Confanioleri F."/>
            <person name="de Daruvar A."/>
            <person name="Despons L."/>
            <person name="Fabre E."/>
            <person name="Fairhead C."/>
            <person name="Ferry-Dumazet H."/>
            <person name="Groppi A."/>
            <person name="Hantraye F."/>
            <person name="Hennequin C."/>
            <person name="Jauniaux N."/>
            <person name="Joyet P."/>
            <person name="Kachouri R."/>
            <person name="Kerrest A."/>
            <person name="Koszul R."/>
            <person name="Lemaire M."/>
            <person name="Lesur I."/>
            <person name="Ma L."/>
            <person name="Muller H."/>
            <person name="Nicaud J.-M."/>
            <person name="Nikolski M."/>
            <person name="Oztas S."/>
            <person name="Ozier-Kalogeropoulos O."/>
            <person name="Pellenz S."/>
            <person name="Potier S."/>
            <person name="Richard G.-F."/>
            <person name="Straub M.-L."/>
            <person name="Suleau A."/>
            <person name="Swennen D."/>
            <person name="Tekaia F."/>
            <person name="Wesolowski-Louvel M."/>
            <person name="Westhof E."/>
            <person name="Wirth B."/>
            <person name="Zeniou-Meyer M."/>
            <person name="Zivanovic Y."/>
            <person name="Bolotin-Fukuhara M."/>
            <person name="Thierry A."/>
            <person name="Bouchier C."/>
            <person name="Caudron B."/>
            <person name="Scarpelli C."/>
            <person name="Gaillardin C."/>
            <person name="Weissenbach J."/>
            <person name="Wincker P."/>
            <person name="Souciet J.-L."/>
        </authorList>
    </citation>
    <scope>NUCLEOTIDE SEQUENCE [LARGE SCALE GENOMIC DNA]</scope>
    <source>
        <strain>ATCC 2001 / BCRC 20586 / JCM 3761 / NBRC 0622 / NRRL Y-65 / CBS 138</strain>
    </source>
</reference>
<reference key="2">
    <citation type="journal article" date="2015" name="Cell. Microbiol.">
        <title>An essential role for phosphatidylinositol 3-kinase in the inhibition of phagosomal maturation, intracellular survival and virulence in Candida glabrata.</title>
        <authorList>
            <person name="Rai M.N."/>
            <person name="Sharma V."/>
            <person name="Balusu S."/>
            <person name="Kaur R."/>
        </authorList>
    </citation>
    <scope>FUNCTION</scope>
    <scope>DISRUPTION PHENOTYPE</scope>
</reference>
<evidence type="ECO:0000250" key="1">
    <source>
        <dbReference type="UniProtKB" id="Q02948"/>
    </source>
</evidence>
<evidence type="ECO:0000269" key="2">
    <source>
    </source>
</evidence>
<evidence type="ECO:0000303" key="3">
    <source>
    </source>
</evidence>
<evidence type="ECO:0000305" key="4"/>